<organism>
    <name type="scientific">Shewanella denitrificans (strain OS217 / ATCC BAA-1090 / DSM 15013)</name>
    <dbReference type="NCBI Taxonomy" id="318161"/>
    <lineage>
        <taxon>Bacteria</taxon>
        <taxon>Pseudomonadati</taxon>
        <taxon>Pseudomonadota</taxon>
        <taxon>Gammaproteobacteria</taxon>
        <taxon>Alteromonadales</taxon>
        <taxon>Shewanellaceae</taxon>
        <taxon>Shewanella</taxon>
    </lineage>
</organism>
<keyword id="KW-0456">Lyase</keyword>
<keyword id="KW-1185">Reference proteome</keyword>
<sequence length="112" mass="12688">MNALTSMKCEACQADAPKVSDQELAELIRLIPDWGVEVRDGIMQLERVYKFKNFKLAMAFTNKLADAAEEEGHHPGILTEWGKVTVTWWSHSIKGLHKNDFIMAAKTDQLLD</sequence>
<reference key="1">
    <citation type="submission" date="2006-03" db="EMBL/GenBank/DDBJ databases">
        <title>Complete sequence of Shewanella denitrificans OS217.</title>
        <authorList>
            <consortium name="US DOE Joint Genome Institute"/>
            <person name="Copeland A."/>
            <person name="Lucas S."/>
            <person name="Lapidus A."/>
            <person name="Barry K."/>
            <person name="Detter J.C."/>
            <person name="Glavina del Rio T."/>
            <person name="Hammon N."/>
            <person name="Israni S."/>
            <person name="Dalin E."/>
            <person name="Tice H."/>
            <person name="Pitluck S."/>
            <person name="Brettin T."/>
            <person name="Bruce D."/>
            <person name="Han C."/>
            <person name="Tapia R."/>
            <person name="Gilna P."/>
            <person name="Kiss H."/>
            <person name="Schmutz J."/>
            <person name="Larimer F."/>
            <person name="Land M."/>
            <person name="Hauser L."/>
            <person name="Kyrpides N."/>
            <person name="Lykidis A."/>
            <person name="Richardson P."/>
        </authorList>
    </citation>
    <scope>NUCLEOTIDE SEQUENCE [LARGE SCALE GENOMIC DNA]</scope>
    <source>
        <strain>OS217 / ATCC BAA-1090 / DSM 15013</strain>
    </source>
</reference>
<evidence type="ECO:0000255" key="1">
    <source>
        <dbReference type="HAMAP-Rule" id="MF_00434"/>
    </source>
</evidence>
<gene>
    <name type="ordered locus">Sden_2594</name>
</gene>
<accession>Q12L03</accession>
<dbReference type="EC" id="4.2.1.96" evidence="1"/>
<dbReference type="EMBL" id="CP000302">
    <property type="protein sequence ID" value="ABE55873.1"/>
    <property type="molecule type" value="Genomic_DNA"/>
</dbReference>
<dbReference type="RefSeq" id="WP_011497024.1">
    <property type="nucleotide sequence ID" value="NC_007954.1"/>
</dbReference>
<dbReference type="SMR" id="Q12L03"/>
<dbReference type="STRING" id="318161.Sden_2594"/>
<dbReference type="KEGG" id="sdn:Sden_2594"/>
<dbReference type="eggNOG" id="COG2154">
    <property type="taxonomic scope" value="Bacteria"/>
</dbReference>
<dbReference type="HOGENOM" id="CLU_081974_2_2_6"/>
<dbReference type="OrthoDB" id="5294615at2"/>
<dbReference type="Proteomes" id="UP000001982">
    <property type="component" value="Chromosome"/>
</dbReference>
<dbReference type="GO" id="GO:0008124">
    <property type="term" value="F:4-alpha-hydroxytetrahydrobiopterin dehydratase activity"/>
    <property type="evidence" value="ECO:0007669"/>
    <property type="project" value="UniProtKB-UniRule"/>
</dbReference>
<dbReference type="GO" id="GO:0006729">
    <property type="term" value="P:tetrahydrobiopterin biosynthetic process"/>
    <property type="evidence" value="ECO:0007669"/>
    <property type="project" value="InterPro"/>
</dbReference>
<dbReference type="CDD" id="cd00913">
    <property type="entry name" value="PCD_DCoH_subfamily_a"/>
    <property type="match status" value="1"/>
</dbReference>
<dbReference type="Gene3D" id="3.30.1360.20">
    <property type="entry name" value="Transcriptional coactivator/pterin dehydratase"/>
    <property type="match status" value="1"/>
</dbReference>
<dbReference type="HAMAP" id="MF_00434">
    <property type="entry name" value="Pterin_4_alpha"/>
    <property type="match status" value="1"/>
</dbReference>
<dbReference type="InterPro" id="IPR036428">
    <property type="entry name" value="PCD_sf"/>
</dbReference>
<dbReference type="InterPro" id="IPR050376">
    <property type="entry name" value="Pterin-4-alpha-carb_dehyd"/>
</dbReference>
<dbReference type="InterPro" id="IPR001533">
    <property type="entry name" value="Pterin_deHydtase"/>
</dbReference>
<dbReference type="NCBIfam" id="NF002016">
    <property type="entry name" value="PRK00823.1-1"/>
    <property type="match status" value="1"/>
</dbReference>
<dbReference type="PANTHER" id="PTHR42805">
    <property type="entry name" value="PTERIN-4-ALPHA-CARBINOLAMINE DEHYDRATASE-RELATED"/>
    <property type="match status" value="1"/>
</dbReference>
<dbReference type="PANTHER" id="PTHR42805:SF1">
    <property type="entry name" value="PTERIN-4-ALPHA-CARBINOLAMINE DEHYDRATASE-RELATED"/>
    <property type="match status" value="1"/>
</dbReference>
<dbReference type="Pfam" id="PF01329">
    <property type="entry name" value="Pterin_4a"/>
    <property type="match status" value="1"/>
</dbReference>
<dbReference type="SUPFAM" id="SSF55248">
    <property type="entry name" value="PCD-like"/>
    <property type="match status" value="1"/>
</dbReference>
<proteinExistence type="inferred from homology"/>
<protein>
    <recommendedName>
        <fullName evidence="1">Putative pterin-4-alpha-carbinolamine dehydratase</fullName>
        <shortName evidence="1">PHS</shortName>
        <ecNumber evidence="1">4.2.1.96</ecNumber>
    </recommendedName>
    <alternativeName>
        <fullName evidence="1">4-alpha-hydroxy-tetrahydropterin dehydratase</fullName>
    </alternativeName>
    <alternativeName>
        <fullName evidence="1">Pterin carbinolamine dehydratase</fullName>
        <shortName evidence="1">PCD</shortName>
    </alternativeName>
</protein>
<name>PHS_SHEDO</name>
<feature type="chain" id="PRO_1000050455" description="Putative pterin-4-alpha-carbinolamine dehydratase">
    <location>
        <begin position="1"/>
        <end position="112"/>
    </location>
</feature>
<comment type="catalytic activity">
    <reaction evidence="1">
        <text>(4aS,6R)-4a-hydroxy-L-erythro-5,6,7,8-tetrahydrobiopterin = (6R)-L-erythro-6,7-dihydrobiopterin + H2O</text>
        <dbReference type="Rhea" id="RHEA:11920"/>
        <dbReference type="ChEBI" id="CHEBI:15377"/>
        <dbReference type="ChEBI" id="CHEBI:15642"/>
        <dbReference type="ChEBI" id="CHEBI:43120"/>
        <dbReference type="EC" id="4.2.1.96"/>
    </reaction>
</comment>
<comment type="similarity">
    <text evidence="1">Belongs to the pterin-4-alpha-carbinolamine dehydratase family.</text>
</comment>